<keyword id="KW-0067">ATP-binding</keyword>
<keyword id="KW-0119">Carbohydrate metabolism</keyword>
<keyword id="KW-0418">Kinase</keyword>
<keyword id="KW-0460">Magnesium</keyword>
<keyword id="KW-0479">Metal-binding</keyword>
<keyword id="KW-0511">Multifunctional enzyme</keyword>
<keyword id="KW-0547">Nucleotide-binding</keyword>
<keyword id="KW-0723">Serine/threonine-protein kinase</keyword>
<keyword id="KW-0808">Transferase</keyword>
<dbReference type="EC" id="2.7.11.-" evidence="1"/>
<dbReference type="EC" id="2.7.4.-" evidence="1"/>
<dbReference type="EMBL" id="AM263198">
    <property type="protein sequence ID" value="CAK21849.1"/>
    <property type="molecule type" value="Genomic_DNA"/>
</dbReference>
<dbReference type="RefSeq" id="WP_011703167.1">
    <property type="nucleotide sequence ID" value="NC_008555.1"/>
</dbReference>
<dbReference type="SMR" id="A0ALG7"/>
<dbReference type="STRING" id="386043.lwe2431"/>
<dbReference type="GeneID" id="61190350"/>
<dbReference type="KEGG" id="lwe:lwe2431"/>
<dbReference type="eggNOG" id="COG1493">
    <property type="taxonomic scope" value="Bacteria"/>
</dbReference>
<dbReference type="HOGENOM" id="CLU_052030_0_1_9"/>
<dbReference type="OrthoDB" id="9778803at2"/>
<dbReference type="Proteomes" id="UP000000779">
    <property type="component" value="Chromosome"/>
</dbReference>
<dbReference type="GO" id="GO:0005524">
    <property type="term" value="F:ATP binding"/>
    <property type="evidence" value="ECO:0007669"/>
    <property type="project" value="UniProtKB-UniRule"/>
</dbReference>
<dbReference type="GO" id="GO:0000287">
    <property type="term" value="F:magnesium ion binding"/>
    <property type="evidence" value="ECO:0007669"/>
    <property type="project" value="UniProtKB-UniRule"/>
</dbReference>
<dbReference type="GO" id="GO:0000155">
    <property type="term" value="F:phosphorelay sensor kinase activity"/>
    <property type="evidence" value="ECO:0007669"/>
    <property type="project" value="InterPro"/>
</dbReference>
<dbReference type="GO" id="GO:0004674">
    <property type="term" value="F:protein serine/threonine kinase activity"/>
    <property type="evidence" value="ECO:0007669"/>
    <property type="project" value="UniProtKB-KW"/>
</dbReference>
<dbReference type="GO" id="GO:0004712">
    <property type="term" value="F:protein serine/threonine/tyrosine kinase activity"/>
    <property type="evidence" value="ECO:0007669"/>
    <property type="project" value="UniProtKB-UniRule"/>
</dbReference>
<dbReference type="GO" id="GO:0006109">
    <property type="term" value="P:regulation of carbohydrate metabolic process"/>
    <property type="evidence" value="ECO:0007669"/>
    <property type="project" value="UniProtKB-UniRule"/>
</dbReference>
<dbReference type="CDD" id="cd01918">
    <property type="entry name" value="HprK_C"/>
    <property type="match status" value="1"/>
</dbReference>
<dbReference type="FunFam" id="3.40.1390.20:FF:000002">
    <property type="entry name" value="HPr kinase/phosphorylase"/>
    <property type="match status" value="1"/>
</dbReference>
<dbReference type="FunFam" id="3.40.50.300:FF:000174">
    <property type="entry name" value="HPr kinase/phosphorylase"/>
    <property type="match status" value="1"/>
</dbReference>
<dbReference type="Gene3D" id="3.40.1390.20">
    <property type="entry name" value="HprK N-terminal domain-like"/>
    <property type="match status" value="1"/>
</dbReference>
<dbReference type="Gene3D" id="3.40.50.300">
    <property type="entry name" value="P-loop containing nucleotide triphosphate hydrolases"/>
    <property type="match status" value="1"/>
</dbReference>
<dbReference type="HAMAP" id="MF_01249">
    <property type="entry name" value="HPr_kinase"/>
    <property type="match status" value="1"/>
</dbReference>
<dbReference type="InterPro" id="IPR003755">
    <property type="entry name" value="HPr(Ser)_kin/Pase"/>
</dbReference>
<dbReference type="InterPro" id="IPR011104">
    <property type="entry name" value="Hpr_kin/Pase_C"/>
</dbReference>
<dbReference type="InterPro" id="IPR011126">
    <property type="entry name" value="Hpr_kin/Pase_Hpr_N"/>
</dbReference>
<dbReference type="InterPro" id="IPR027417">
    <property type="entry name" value="P-loop_NTPase"/>
</dbReference>
<dbReference type="InterPro" id="IPR028979">
    <property type="entry name" value="Ser_kin/Pase_Hpr-like_N_sf"/>
</dbReference>
<dbReference type="NCBIfam" id="TIGR00679">
    <property type="entry name" value="hpr-ser"/>
    <property type="match status" value="1"/>
</dbReference>
<dbReference type="PANTHER" id="PTHR30305:SF1">
    <property type="entry name" value="HPR KINASE_PHOSPHORYLASE"/>
    <property type="match status" value="1"/>
</dbReference>
<dbReference type="PANTHER" id="PTHR30305">
    <property type="entry name" value="PROTEIN YJDM-RELATED"/>
    <property type="match status" value="1"/>
</dbReference>
<dbReference type="Pfam" id="PF07475">
    <property type="entry name" value="Hpr_kinase_C"/>
    <property type="match status" value="1"/>
</dbReference>
<dbReference type="Pfam" id="PF02603">
    <property type="entry name" value="Hpr_kinase_N"/>
    <property type="match status" value="1"/>
</dbReference>
<dbReference type="SUPFAM" id="SSF75138">
    <property type="entry name" value="HprK N-terminal domain-like"/>
    <property type="match status" value="1"/>
</dbReference>
<dbReference type="SUPFAM" id="SSF53795">
    <property type="entry name" value="PEP carboxykinase-like"/>
    <property type="match status" value="1"/>
</dbReference>
<sequence>MTKSVTVKDLKERLNLELICSETGLERPILTSDLSRPGLELTGFFSYYPEDRVQLFGMTEISFSEGMEPEERLKRYKQMCTKRTPAFVISRNLEVPKELVAAAKEADIPVLRSRLKTTRLSVYITNYLESRLAPVISMHGVLVDIYGLGVLITGSSGVGKSETALELVKRGHRLVADDNVEIRQEDELTLIGSSPAIIEHLLEIRGLGIINVMTLFGAGAVRSSKKITIVVHLENWDPDKHYDRVGLDQEKTKIFDMDIPKITVPVRPGRNLSVIIEVAAMNFRLKNMGYNAAEQFTQDLNNLIGHNSSMND</sequence>
<proteinExistence type="inferred from homology"/>
<evidence type="ECO:0000255" key="1">
    <source>
        <dbReference type="HAMAP-Rule" id="MF_01249"/>
    </source>
</evidence>
<name>HPRK_LISW6</name>
<organism>
    <name type="scientific">Listeria welshimeri serovar 6b (strain ATCC 35897 / DSM 20650 / CCUG 15529 / CIP 8149 / NCTC 11857 / SLCC 5334 / V8)</name>
    <dbReference type="NCBI Taxonomy" id="386043"/>
    <lineage>
        <taxon>Bacteria</taxon>
        <taxon>Bacillati</taxon>
        <taxon>Bacillota</taxon>
        <taxon>Bacilli</taxon>
        <taxon>Bacillales</taxon>
        <taxon>Listeriaceae</taxon>
        <taxon>Listeria</taxon>
    </lineage>
</organism>
<reference key="1">
    <citation type="journal article" date="2006" name="J. Bacteriol.">
        <title>Whole-genome sequence of Listeria welshimeri reveals common steps in genome reduction with Listeria innocua as compared to Listeria monocytogenes.</title>
        <authorList>
            <person name="Hain T."/>
            <person name="Steinweg C."/>
            <person name="Kuenne C.T."/>
            <person name="Billion A."/>
            <person name="Ghai R."/>
            <person name="Chatterjee S.S."/>
            <person name="Domann E."/>
            <person name="Kaerst U."/>
            <person name="Goesmann A."/>
            <person name="Bekel T."/>
            <person name="Bartels D."/>
            <person name="Kaiser O."/>
            <person name="Meyer F."/>
            <person name="Puehler A."/>
            <person name="Weisshaar B."/>
            <person name="Wehland J."/>
            <person name="Liang C."/>
            <person name="Dandekar T."/>
            <person name="Lampidis R."/>
            <person name="Kreft J."/>
            <person name="Goebel W."/>
            <person name="Chakraborty T."/>
        </authorList>
    </citation>
    <scope>NUCLEOTIDE SEQUENCE [LARGE SCALE GENOMIC DNA]</scope>
    <source>
        <strain>ATCC 35897 / DSM 20650 / CCUG 15529 / CIP 8149 / NCTC 11857 / SLCC 5334 / V8</strain>
    </source>
</reference>
<accession>A0ALG7</accession>
<comment type="function">
    <text evidence="1">Catalyzes the ATP- as well as the pyrophosphate-dependent phosphorylation of a specific serine residue in HPr, a phosphocarrier protein of the phosphoenolpyruvate-dependent sugar phosphotransferase system (PTS). HprK/P also catalyzes the pyrophosphate-producing, inorganic phosphate-dependent dephosphorylation (phosphorolysis) of seryl-phosphorylated HPr (P-Ser-HPr). The two antagonistic activities of HprK/P are regulated by several intracellular metabolites, which change their concentration in response to the absence or presence of rapidly metabolisable carbon sources (glucose, fructose, etc.) in the growth medium. Therefore, by controlling the phosphorylation state of HPr, HPrK/P is a sensor enzyme that plays a major role in the regulation of carbon metabolism and sugar transport: it mediates carbon catabolite repression (CCR), and regulates PTS-catalyzed carbohydrate uptake and inducer exclusion.</text>
</comment>
<comment type="catalytic activity">
    <reaction evidence="1">
        <text>[HPr protein]-L-serine + ATP = [HPr protein]-O-phospho-L-serine + ADP + H(+)</text>
        <dbReference type="Rhea" id="RHEA:46600"/>
        <dbReference type="Rhea" id="RHEA-COMP:11602"/>
        <dbReference type="Rhea" id="RHEA-COMP:11603"/>
        <dbReference type="ChEBI" id="CHEBI:15378"/>
        <dbReference type="ChEBI" id="CHEBI:29999"/>
        <dbReference type="ChEBI" id="CHEBI:30616"/>
        <dbReference type="ChEBI" id="CHEBI:83421"/>
        <dbReference type="ChEBI" id="CHEBI:456216"/>
    </reaction>
</comment>
<comment type="catalytic activity">
    <reaction evidence="1">
        <text>[HPr protein]-O-phospho-L-serine + phosphate + H(+) = [HPr protein]-L-serine + diphosphate</text>
        <dbReference type="Rhea" id="RHEA:46604"/>
        <dbReference type="Rhea" id="RHEA-COMP:11602"/>
        <dbReference type="Rhea" id="RHEA-COMP:11603"/>
        <dbReference type="ChEBI" id="CHEBI:15378"/>
        <dbReference type="ChEBI" id="CHEBI:29999"/>
        <dbReference type="ChEBI" id="CHEBI:33019"/>
        <dbReference type="ChEBI" id="CHEBI:43474"/>
        <dbReference type="ChEBI" id="CHEBI:83421"/>
    </reaction>
</comment>
<comment type="cofactor">
    <cofactor evidence="1">
        <name>Mg(2+)</name>
        <dbReference type="ChEBI" id="CHEBI:18420"/>
    </cofactor>
</comment>
<comment type="subunit">
    <text evidence="1">Homohexamer.</text>
</comment>
<comment type="domain">
    <text evidence="1">The Walker A ATP-binding motif also binds Pi and PPi.</text>
</comment>
<comment type="miscellaneous">
    <text evidence="1">Both phosphorylation and phosphorolysis are carried out by the same active site and suggest a common mechanism for both reactions.</text>
</comment>
<comment type="similarity">
    <text evidence="1">Belongs to the HPrK/P family.</text>
</comment>
<feature type="chain" id="PRO_1000067159" description="HPr kinase/phosphorylase">
    <location>
        <begin position="1"/>
        <end position="312"/>
    </location>
</feature>
<feature type="region of interest" description="Important for the catalytic mechanism of both phosphorylation and dephosphorylation" evidence="1">
    <location>
        <begin position="202"/>
        <end position="211"/>
    </location>
</feature>
<feature type="region of interest" description="Important for the catalytic mechanism of dephosphorylation" evidence="1">
    <location>
        <begin position="265"/>
        <end position="270"/>
    </location>
</feature>
<feature type="active site" evidence="1">
    <location>
        <position position="139"/>
    </location>
</feature>
<feature type="active site" evidence="1">
    <location>
        <position position="160"/>
    </location>
</feature>
<feature type="active site" description="Proton acceptor; for phosphorylation activity. Proton donor; for dephosphorylation activity" evidence="1">
    <location>
        <position position="178"/>
    </location>
</feature>
<feature type="active site" evidence="1">
    <location>
        <position position="244"/>
    </location>
</feature>
<feature type="binding site" evidence="1">
    <location>
        <begin position="154"/>
        <end position="161"/>
    </location>
    <ligand>
        <name>ATP</name>
        <dbReference type="ChEBI" id="CHEBI:30616"/>
    </ligand>
</feature>
<feature type="binding site" evidence="1">
    <location>
        <position position="161"/>
    </location>
    <ligand>
        <name>Mg(2+)</name>
        <dbReference type="ChEBI" id="CHEBI:18420"/>
    </ligand>
</feature>
<feature type="binding site" evidence="1">
    <location>
        <position position="203"/>
    </location>
    <ligand>
        <name>Mg(2+)</name>
        <dbReference type="ChEBI" id="CHEBI:18420"/>
    </ligand>
</feature>
<protein>
    <recommendedName>
        <fullName evidence="1">HPr kinase/phosphorylase</fullName>
        <shortName evidence="1">HPrK/P</shortName>
        <ecNumber evidence="1">2.7.11.-</ecNumber>
        <ecNumber evidence="1">2.7.4.-</ecNumber>
    </recommendedName>
    <alternativeName>
        <fullName evidence="1">HPr(Ser) kinase/phosphorylase</fullName>
    </alternativeName>
</protein>
<gene>
    <name evidence="1" type="primary">hprK</name>
    <name type="ordered locus">lwe2431</name>
</gene>